<gene>
    <name type="primary">FOXL1</name>
    <name type="synonym">FKHL11</name>
    <name type="synonym">FREAC7</name>
</gene>
<protein>
    <recommendedName>
        <fullName>Forkhead box protein L1</fullName>
    </recommendedName>
    <alternativeName>
        <fullName>Forkhead-related protein FKHL11</fullName>
    </alternativeName>
    <alternativeName>
        <fullName>Forkhead-related transcription factor 7</fullName>
        <shortName>FREAC-7</shortName>
    </alternativeName>
</protein>
<dbReference type="EMBL" id="AF315075">
    <property type="protein sequence ID" value="AAG40312.1"/>
    <property type="molecule type" value="Genomic_DNA"/>
</dbReference>
<dbReference type="EMBL" id="AC009108">
    <property type="status" value="NOT_ANNOTATED_CDS"/>
    <property type="molecule type" value="Genomic_DNA"/>
</dbReference>
<dbReference type="EMBL" id="BC117226">
    <property type="protein sequence ID" value="AAI17227.1"/>
    <property type="molecule type" value="mRNA"/>
</dbReference>
<dbReference type="EMBL" id="U13225">
    <property type="protein sequence ID" value="AAA92042.1"/>
    <property type="molecule type" value="Genomic_DNA"/>
</dbReference>
<dbReference type="CCDS" id="CCDS10959.1"/>
<dbReference type="PIR" id="S51630">
    <property type="entry name" value="S51630"/>
</dbReference>
<dbReference type="RefSeq" id="NP_005241.1">
    <property type="nucleotide sequence ID" value="NM_005250.3"/>
</dbReference>
<dbReference type="SMR" id="Q12952"/>
<dbReference type="BioGRID" id="108589">
    <property type="interactions" value="194"/>
</dbReference>
<dbReference type="FunCoup" id="Q12952">
    <property type="interactions" value="783"/>
</dbReference>
<dbReference type="IntAct" id="Q12952">
    <property type="interactions" value="185"/>
</dbReference>
<dbReference type="MINT" id="Q12952"/>
<dbReference type="STRING" id="9606.ENSP00000326272"/>
<dbReference type="iPTMnet" id="Q12952"/>
<dbReference type="PhosphoSitePlus" id="Q12952"/>
<dbReference type="BioMuta" id="FOXL1"/>
<dbReference type="DMDM" id="13638268"/>
<dbReference type="jPOST" id="Q12952"/>
<dbReference type="MassIVE" id="Q12952"/>
<dbReference type="PaxDb" id="9606-ENSP00000326272"/>
<dbReference type="PeptideAtlas" id="Q12952"/>
<dbReference type="Antibodypedia" id="17198">
    <property type="antibodies" value="469 antibodies from 28 providers"/>
</dbReference>
<dbReference type="DNASU" id="2300"/>
<dbReference type="Ensembl" id="ENST00000320241.5">
    <property type="protein sequence ID" value="ENSP00000326272.3"/>
    <property type="gene ID" value="ENSG00000176678.6"/>
</dbReference>
<dbReference type="GeneID" id="2300"/>
<dbReference type="KEGG" id="hsa:2300"/>
<dbReference type="MANE-Select" id="ENST00000320241.5">
    <property type="protein sequence ID" value="ENSP00000326272.3"/>
    <property type="RefSeq nucleotide sequence ID" value="NM_005250.3"/>
    <property type="RefSeq protein sequence ID" value="NP_005241.1"/>
</dbReference>
<dbReference type="UCSC" id="uc002fjr.4">
    <property type="organism name" value="human"/>
</dbReference>
<dbReference type="AGR" id="HGNC:3817"/>
<dbReference type="CTD" id="2300"/>
<dbReference type="DisGeNET" id="2300"/>
<dbReference type="GeneCards" id="FOXL1"/>
<dbReference type="HGNC" id="HGNC:3817">
    <property type="gene designation" value="FOXL1"/>
</dbReference>
<dbReference type="HPA" id="ENSG00000176678">
    <property type="expression patterns" value="Low tissue specificity"/>
</dbReference>
<dbReference type="MalaCards" id="FOXL1"/>
<dbReference type="MIM" id="603252">
    <property type="type" value="gene"/>
</dbReference>
<dbReference type="MIM" id="620576">
    <property type="type" value="phenotype"/>
</dbReference>
<dbReference type="neXtProt" id="NX_Q12952"/>
<dbReference type="OpenTargets" id="ENSG00000176678"/>
<dbReference type="PharmGKB" id="PA28234"/>
<dbReference type="VEuPathDB" id="HostDB:ENSG00000176678"/>
<dbReference type="eggNOG" id="KOG2294">
    <property type="taxonomic scope" value="Eukaryota"/>
</dbReference>
<dbReference type="GeneTree" id="ENSGT00940000162251"/>
<dbReference type="HOGENOM" id="CLU_052451_0_0_1"/>
<dbReference type="InParanoid" id="Q12952"/>
<dbReference type="OMA" id="SCFPLHF"/>
<dbReference type="OrthoDB" id="5954824at2759"/>
<dbReference type="PAN-GO" id="Q12952">
    <property type="GO annotations" value="5 GO annotations based on evolutionary models"/>
</dbReference>
<dbReference type="PhylomeDB" id="Q12952"/>
<dbReference type="TreeFam" id="TF316127"/>
<dbReference type="PathwayCommons" id="Q12952"/>
<dbReference type="SignaLink" id="Q12952"/>
<dbReference type="BioGRID-ORCS" id="2300">
    <property type="hits" value="15 hits in 1171 CRISPR screens"/>
</dbReference>
<dbReference type="GenomeRNAi" id="2300"/>
<dbReference type="Pharos" id="Q12952">
    <property type="development level" value="Tbio"/>
</dbReference>
<dbReference type="PRO" id="PR:Q12952"/>
<dbReference type="Proteomes" id="UP000005640">
    <property type="component" value="Chromosome 16"/>
</dbReference>
<dbReference type="RNAct" id="Q12952">
    <property type="molecule type" value="protein"/>
</dbReference>
<dbReference type="Bgee" id="ENSG00000176678">
    <property type="expression patterns" value="Expressed in tibial artery and 105 other cell types or tissues"/>
</dbReference>
<dbReference type="ExpressionAtlas" id="Q12952">
    <property type="expression patterns" value="baseline and differential"/>
</dbReference>
<dbReference type="GO" id="GO:0000785">
    <property type="term" value="C:chromatin"/>
    <property type="evidence" value="ECO:0000247"/>
    <property type="project" value="NTNU_SB"/>
</dbReference>
<dbReference type="GO" id="GO:0005634">
    <property type="term" value="C:nucleus"/>
    <property type="evidence" value="ECO:0000314"/>
    <property type="project" value="UniProtKB"/>
</dbReference>
<dbReference type="GO" id="GO:0003677">
    <property type="term" value="F:DNA binding"/>
    <property type="evidence" value="ECO:0000314"/>
    <property type="project" value="MGI"/>
</dbReference>
<dbReference type="GO" id="GO:0008301">
    <property type="term" value="F:DNA binding, bending"/>
    <property type="evidence" value="ECO:0000303"/>
    <property type="project" value="UniProtKB"/>
</dbReference>
<dbReference type="GO" id="GO:0003700">
    <property type="term" value="F:DNA-binding transcription factor activity"/>
    <property type="evidence" value="ECO:0000250"/>
    <property type="project" value="UniProtKB"/>
</dbReference>
<dbReference type="GO" id="GO:0000981">
    <property type="term" value="F:DNA-binding transcription factor activity, RNA polymerase II-specific"/>
    <property type="evidence" value="ECO:0000247"/>
    <property type="project" value="NTNU_SB"/>
</dbReference>
<dbReference type="GO" id="GO:0000978">
    <property type="term" value="F:RNA polymerase II cis-regulatory region sequence-specific DNA binding"/>
    <property type="evidence" value="ECO:0000318"/>
    <property type="project" value="GO_Central"/>
</dbReference>
<dbReference type="GO" id="GO:0043565">
    <property type="term" value="F:sequence-specific DNA binding"/>
    <property type="evidence" value="ECO:0000314"/>
    <property type="project" value="UniProtKB"/>
</dbReference>
<dbReference type="GO" id="GO:0009653">
    <property type="term" value="P:anatomical structure morphogenesis"/>
    <property type="evidence" value="ECO:0000318"/>
    <property type="project" value="GO_Central"/>
</dbReference>
<dbReference type="GO" id="GO:0030154">
    <property type="term" value="P:cell differentiation"/>
    <property type="evidence" value="ECO:0000318"/>
    <property type="project" value="GO_Central"/>
</dbReference>
<dbReference type="GO" id="GO:0007507">
    <property type="term" value="P:heart development"/>
    <property type="evidence" value="ECO:0000315"/>
    <property type="project" value="DFLAT"/>
</dbReference>
<dbReference type="GO" id="GO:0061146">
    <property type="term" value="P:Peyer's patch morphogenesis"/>
    <property type="evidence" value="ECO:0007669"/>
    <property type="project" value="Ensembl"/>
</dbReference>
<dbReference type="GO" id="GO:0030166">
    <property type="term" value="P:proteoglycan biosynthetic process"/>
    <property type="evidence" value="ECO:0000250"/>
    <property type="project" value="UniProtKB"/>
</dbReference>
<dbReference type="GO" id="GO:0006357">
    <property type="term" value="P:regulation of transcription by RNA polymerase II"/>
    <property type="evidence" value="ECO:0000318"/>
    <property type="project" value="GO_Central"/>
</dbReference>
<dbReference type="GO" id="GO:0030111">
    <property type="term" value="P:regulation of Wnt signaling pathway"/>
    <property type="evidence" value="ECO:0000250"/>
    <property type="project" value="UniProtKB"/>
</dbReference>
<dbReference type="GO" id="GO:0007495">
    <property type="term" value="P:visceral mesoderm-endoderm interaction involved in midgut development"/>
    <property type="evidence" value="ECO:0000250"/>
    <property type="project" value="UniProtKB"/>
</dbReference>
<dbReference type="CDD" id="cd20027">
    <property type="entry name" value="FH_FOXL1"/>
    <property type="match status" value="1"/>
</dbReference>
<dbReference type="FunFam" id="1.10.10.10:FF:000016">
    <property type="entry name" value="Forkhead box protein I1"/>
    <property type="match status" value="1"/>
</dbReference>
<dbReference type="Gene3D" id="1.10.10.10">
    <property type="entry name" value="Winged helix-like DNA-binding domain superfamily/Winged helix DNA-binding domain"/>
    <property type="match status" value="1"/>
</dbReference>
<dbReference type="InterPro" id="IPR047514">
    <property type="entry name" value="FH_FOXL1"/>
</dbReference>
<dbReference type="InterPro" id="IPR001766">
    <property type="entry name" value="Fork_head_dom"/>
</dbReference>
<dbReference type="InterPro" id="IPR050211">
    <property type="entry name" value="FOX_domain-containing"/>
</dbReference>
<dbReference type="InterPro" id="IPR018122">
    <property type="entry name" value="TF_fork_head_CS_1"/>
</dbReference>
<dbReference type="InterPro" id="IPR030456">
    <property type="entry name" value="TF_fork_head_CS_2"/>
</dbReference>
<dbReference type="InterPro" id="IPR036388">
    <property type="entry name" value="WH-like_DNA-bd_sf"/>
</dbReference>
<dbReference type="InterPro" id="IPR036390">
    <property type="entry name" value="WH_DNA-bd_sf"/>
</dbReference>
<dbReference type="PANTHER" id="PTHR11829">
    <property type="entry name" value="FORKHEAD BOX PROTEIN"/>
    <property type="match status" value="1"/>
</dbReference>
<dbReference type="PANTHER" id="PTHR11829:SF204">
    <property type="entry name" value="FORKHEAD BOX PROTEIN L1"/>
    <property type="match status" value="1"/>
</dbReference>
<dbReference type="Pfam" id="PF00250">
    <property type="entry name" value="Forkhead"/>
    <property type="match status" value="1"/>
</dbReference>
<dbReference type="PRINTS" id="PR00053">
    <property type="entry name" value="FORKHEAD"/>
</dbReference>
<dbReference type="SMART" id="SM00339">
    <property type="entry name" value="FH"/>
    <property type="match status" value="1"/>
</dbReference>
<dbReference type="SUPFAM" id="SSF46785">
    <property type="entry name" value="Winged helix' DNA-binding domain"/>
    <property type="match status" value="1"/>
</dbReference>
<dbReference type="PROSITE" id="PS00657">
    <property type="entry name" value="FORK_HEAD_1"/>
    <property type="match status" value="1"/>
</dbReference>
<dbReference type="PROSITE" id="PS00658">
    <property type="entry name" value="FORK_HEAD_2"/>
    <property type="match status" value="1"/>
</dbReference>
<dbReference type="PROSITE" id="PS50039">
    <property type="entry name" value="FORK_HEAD_3"/>
    <property type="match status" value="1"/>
</dbReference>
<evidence type="ECO:0000250" key="1"/>
<evidence type="ECO:0000255" key="2">
    <source>
        <dbReference type="PROSITE-ProRule" id="PRU00089"/>
    </source>
</evidence>
<evidence type="ECO:0000256" key="3">
    <source>
        <dbReference type="SAM" id="MobiDB-lite"/>
    </source>
</evidence>
<evidence type="ECO:0000269" key="4">
    <source>
    </source>
</evidence>
<accession>Q12952</accession>
<accession>Q17RR1</accession>
<accession>Q9H242</accession>
<organism>
    <name type="scientific">Homo sapiens</name>
    <name type="common">Human</name>
    <dbReference type="NCBI Taxonomy" id="9606"/>
    <lineage>
        <taxon>Eukaryota</taxon>
        <taxon>Metazoa</taxon>
        <taxon>Chordata</taxon>
        <taxon>Craniata</taxon>
        <taxon>Vertebrata</taxon>
        <taxon>Euteleostomi</taxon>
        <taxon>Mammalia</taxon>
        <taxon>Eutheria</taxon>
        <taxon>Euarchontoglires</taxon>
        <taxon>Primates</taxon>
        <taxon>Haplorrhini</taxon>
        <taxon>Catarrhini</taxon>
        <taxon>Hominidae</taxon>
        <taxon>Homo</taxon>
    </lineage>
</organism>
<feature type="chain" id="PRO_0000091859" description="Forkhead box protein L1">
    <location>
        <begin position="1"/>
        <end position="345"/>
    </location>
</feature>
<feature type="DNA-binding region" description="Fork-head" evidence="2">
    <location>
        <begin position="48"/>
        <end position="139"/>
    </location>
</feature>
<feature type="region of interest" description="Disordered" evidence="3">
    <location>
        <begin position="136"/>
        <end position="289"/>
    </location>
</feature>
<feature type="compositionally biased region" description="Basic and acidic residues" evidence="3">
    <location>
        <begin position="153"/>
        <end position="165"/>
    </location>
</feature>
<feature type="compositionally biased region" description="Low complexity" evidence="3">
    <location>
        <begin position="188"/>
        <end position="199"/>
    </location>
</feature>
<feature type="compositionally biased region" description="Low complexity" evidence="3">
    <location>
        <begin position="220"/>
        <end position="234"/>
    </location>
</feature>
<feature type="compositionally biased region" description="Low complexity" evidence="3">
    <location>
        <begin position="242"/>
        <end position="253"/>
    </location>
</feature>
<feature type="sequence variant" id="VAR_089137" description="In OTSC11; likely pathogenic; unable to activate transcription in a luciferase assay; circular dichroism shows altered protein structure; does not affect localization to the nucleus." evidence="4">
    <location>
        <begin position="326"/>
        <end position="330"/>
    </location>
</feature>
<name>FOXL1_HUMAN</name>
<sequence>MSHLFDPRLPALAASPMLYLYGPERPGLPLAFAPAAALAASGRAETPQKPPYSYIALIAMAIQDAPEQRVTLNGIYQFIMDRFPFYHDNRQGWQNSIRHNLSLNDCFVKVPREKGRPGKGSYWTLDPRCLDMFENGNYRRRKRKPKPGPGAPEAKRPRAETHQRSAEAQPEAGSGAGGSGPAISRLQAAPAGPSPLLDGPSPPAPLHWPGTASPNEDAGDAAQGAAAVAVGQAARTGDGPGSPLRPASRSSPKSSDKSKSFSIDSILAGKQGQKPPSGDELLGGAKPGPGGRLGASLLAASSSLRPPFNASLMLDPHVQGGFYQLGIPFLSYFPLQVPDTVLHFQ</sequence>
<comment type="function">
    <text evidence="1">Transcription factor required for proper proliferation and differentiation in the gastrointestinal epithelium. Target gene of the hedgehog (Hh) signaling pathway via GLI2 and GLI3 transcription factors (By similarity).</text>
</comment>
<comment type="subcellular location">
    <subcellularLocation>
        <location evidence="4">Nucleus</location>
    </subcellularLocation>
</comment>
<comment type="disease" evidence="4">
    <disease id="DI-06789">
        <name>Otosclerosis 11</name>
        <acronym>OTSC11</acronym>
        <description>A form of otosclerosis, a pathological condition of the ear characterized by formation of spongy bone in the labyrinth capsule, especially in front of and posterior to the footplate of the stapes, resulting in conductive hearing impairment. Cochlear otosclerosis may also develop, resulting in sensorineural hearing loss. OTSC11 is an autosomal dominant form characterized by onset of progressive deafness in the second to third decade of life. Deafness ranges from moderate to severe, and may be conductive, sensorineural, or mixed.</description>
        <dbReference type="MIM" id="620576"/>
    </disease>
    <text>The disease may be caused by variants affecting the gene represented in this entry.</text>
</comment>
<proteinExistence type="evidence at protein level"/>
<keyword id="KW-0209">Deafness</keyword>
<keyword id="KW-0225">Disease variant</keyword>
<keyword id="KW-0238">DNA-binding</keyword>
<keyword id="KW-0539">Nucleus</keyword>
<keyword id="KW-1267">Proteomics identification</keyword>
<keyword id="KW-1185">Reference proteome</keyword>
<keyword id="KW-0804">Transcription</keyword>
<keyword id="KW-0805">Transcription regulation</keyword>
<reference key="1">
    <citation type="journal article" date="2000" name="Am. J. Hum. Genet.">
        <title>Mutations in FOXC2 (MFH-1), a forkhead family transcription factor, are responsible for the hereditary lymphedema-distichiasis syndrome.</title>
        <authorList>
            <person name="Fang J."/>
            <person name="Dagenais S.L."/>
            <person name="Erickson R.P."/>
            <person name="Arlt M.F."/>
            <person name="Glynn M.W."/>
            <person name="Gorski J.L."/>
            <person name="Seaver L.H."/>
            <person name="Glover T.W."/>
        </authorList>
    </citation>
    <scope>NUCLEOTIDE SEQUENCE [GENOMIC DNA]</scope>
</reference>
<reference key="2">
    <citation type="journal article" date="2004" name="Nature">
        <title>The sequence and analysis of duplication-rich human chromosome 16.</title>
        <authorList>
            <person name="Martin J."/>
            <person name="Han C."/>
            <person name="Gordon L.A."/>
            <person name="Terry A."/>
            <person name="Prabhakar S."/>
            <person name="She X."/>
            <person name="Xie G."/>
            <person name="Hellsten U."/>
            <person name="Chan Y.M."/>
            <person name="Altherr M."/>
            <person name="Couronne O."/>
            <person name="Aerts A."/>
            <person name="Bajorek E."/>
            <person name="Black S."/>
            <person name="Blumer H."/>
            <person name="Branscomb E."/>
            <person name="Brown N.C."/>
            <person name="Bruno W.J."/>
            <person name="Buckingham J.M."/>
            <person name="Callen D.F."/>
            <person name="Campbell C.S."/>
            <person name="Campbell M.L."/>
            <person name="Campbell E.W."/>
            <person name="Caoile C."/>
            <person name="Challacombe J.F."/>
            <person name="Chasteen L.A."/>
            <person name="Chertkov O."/>
            <person name="Chi H.C."/>
            <person name="Christensen M."/>
            <person name="Clark L.M."/>
            <person name="Cohn J.D."/>
            <person name="Denys M."/>
            <person name="Detter J.C."/>
            <person name="Dickson M."/>
            <person name="Dimitrijevic-Bussod M."/>
            <person name="Escobar J."/>
            <person name="Fawcett J.J."/>
            <person name="Flowers D."/>
            <person name="Fotopulos D."/>
            <person name="Glavina T."/>
            <person name="Gomez M."/>
            <person name="Gonzales E."/>
            <person name="Goodstein D."/>
            <person name="Goodwin L.A."/>
            <person name="Grady D.L."/>
            <person name="Grigoriev I."/>
            <person name="Groza M."/>
            <person name="Hammon N."/>
            <person name="Hawkins T."/>
            <person name="Haydu L."/>
            <person name="Hildebrand C.E."/>
            <person name="Huang W."/>
            <person name="Israni S."/>
            <person name="Jett J."/>
            <person name="Jewett P.B."/>
            <person name="Kadner K."/>
            <person name="Kimball H."/>
            <person name="Kobayashi A."/>
            <person name="Krawczyk M.-C."/>
            <person name="Leyba T."/>
            <person name="Longmire J.L."/>
            <person name="Lopez F."/>
            <person name="Lou Y."/>
            <person name="Lowry S."/>
            <person name="Ludeman T."/>
            <person name="Manohar C.F."/>
            <person name="Mark G.A."/>
            <person name="McMurray K.L."/>
            <person name="Meincke L.J."/>
            <person name="Morgan J."/>
            <person name="Moyzis R.K."/>
            <person name="Mundt M.O."/>
            <person name="Munk A.C."/>
            <person name="Nandkeshwar R.D."/>
            <person name="Pitluck S."/>
            <person name="Pollard M."/>
            <person name="Predki P."/>
            <person name="Parson-Quintana B."/>
            <person name="Ramirez L."/>
            <person name="Rash S."/>
            <person name="Retterer J."/>
            <person name="Ricke D.O."/>
            <person name="Robinson D.L."/>
            <person name="Rodriguez A."/>
            <person name="Salamov A."/>
            <person name="Saunders E.H."/>
            <person name="Scott D."/>
            <person name="Shough T."/>
            <person name="Stallings R.L."/>
            <person name="Stalvey M."/>
            <person name="Sutherland R.D."/>
            <person name="Tapia R."/>
            <person name="Tesmer J.G."/>
            <person name="Thayer N."/>
            <person name="Thompson L.S."/>
            <person name="Tice H."/>
            <person name="Torney D.C."/>
            <person name="Tran-Gyamfi M."/>
            <person name="Tsai M."/>
            <person name="Ulanovsky L.E."/>
            <person name="Ustaszewska A."/>
            <person name="Vo N."/>
            <person name="White P.S."/>
            <person name="Williams A.L."/>
            <person name="Wills P.L."/>
            <person name="Wu J.-R."/>
            <person name="Wu K."/>
            <person name="Yang J."/>
            <person name="DeJong P."/>
            <person name="Bruce D."/>
            <person name="Doggett N.A."/>
            <person name="Deaven L."/>
            <person name="Schmutz J."/>
            <person name="Grimwood J."/>
            <person name="Richardson P."/>
            <person name="Rokhsar D.S."/>
            <person name="Eichler E.E."/>
            <person name="Gilna P."/>
            <person name="Lucas S.M."/>
            <person name="Myers R.M."/>
            <person name="Rubin E.M."/>
            <person name="Pennacchio L.A."/>
        </authorList>
    </citation>
    <scope>NUCLEOTIDE SEQUENCE [LARGE SCALE GENOMIC DNA]</scope>
</reference>
<reference key="3">
    <citation type="journal article" date="2004" name="Genome Res.">
        <title>The status, quality, and expansion of the NIH full-length cDNA project: the Mammalian Gene Collection (MGC).</title>
        <authorList>
            <consortium name="The MGC Project Team"/>
        </authorList>
    </citation>
    <scope>NUCLEOTIDE SEQUENCE [LARGE SCALE MRNA]</scope>
</reference>
<reference key="4">
    <citation type="journal article" date="1994" name="EMBO J.">
        <title>Cloning and characterization of seven human forkhead proteins: binding site specificity and DNA bending.</title>
        <authorList>
            <person name="Pierrou S."/>
            <person name="Hellqvist M."/>
            <person name="Samuelsson L."/>
            <person name="Enerbaeck S."/>
            <person name="Carlsson P."/>
        </authorList>
    </citation>
    <scope>NUCLEOTIDE SEQUENCE [GENOMIC DNA] OF 44-149</scope>
</reference>
<reference key="5">
    <citation type="journal article" date="2022" name="Hum. Genet.">
        <title>A pathogenic deletion in Forkhead Box L1 (FOXL1) identifies the first otosclerosis (OTSC) gene.</title>
        <authorList>
            <person name="Abdelfatah N."/>
            <person name="Mostafa A.A."/>
            <person name="French C.R."/>
            <person name="Doucette L.P."/>
            <person name="Penney C."/>
            <person name="Lucas M.B."/>
            <person name="Griffin A."/>
            <person name="Booth V."/>
            <person name="Rowley C."/>
            <person name="Besaw J.E."/>
            <person name="Tranebjaerg L."/>
            <person name="Rendtorff N.D."/>
            <person name="Hodgkinson K.A."/>
            <person name="Little L.A."/>
            <person name="Agrawal S."/>
            <person name="Parnes L."/>
            <person name="Batten T."/>
            <person name="Moore S."/>
            <person name="Hu P."/>
            <person name="Pater J.A."/>
            <person name="Houston J."/>
            <person name="Galutira D."/>
            <person name="Benteau T."/>
            <person name="MacDonald C."/>
            <person name="French D."/>
            <person name="O'Rielly D.D."/>
            <person name="Stanton S.G."/>
            <person name="Young T.L."/>
        </authorList>
    </citation>
    <scope>VARIANT OTSC11 326-GLY--LEU-330 DEL</scope>
    <scope>INVOLVEMENT IN OTSC11</scope>
    <scope>SUBCELLULAR LOCATION</scope>
    <scope>CHARACTERIZATION OF VARIANT OTSC11 326-GLY--LEU-330 DEL</scope>
</reference>